<sequence>MFPVKVKVEKSEMEMAKARNQLDAVLQCLLEKSHMDRERLDEEAGKTPLDTHNKDCSIAATGKRPSARFPHQRRKKRREMDDGLAEGGPQRSNTYVIKLFDRSVDLAQFSENTPLYPICRAWMRNSPTVRERERSPGSPLPPLPEDGEGSEVINSKNRDVYKLPPPTAPGPLGDACRSRIPSPLQPETEGTPDDEPSEPEPSPSTLIYRNMQRWKRIRQRWKEASHRNQLRYSESMKILREMYDRQ</sequence>
<gene>
    <name type="primary">Lin37</name>
</gene>
<protein>
    <recommendedName>
        <fullName>Protein lin-37 homolog</fullName>
    </recommendedName>
    <alternativeName>
        <fullName>Antolefinin</fullName>
    </alternativeName>
    <alternativeName>
        <fullName>Antolefinine</fullName>
    </alternativeName>
</protein>
<comment type="subunit">
    <text evidence="1">Component of the DREAM complex (also named LINC complex) at least composed of E2F4, E2F5, LIN9, LIN37, LIN52, LIN54, MYBL1, MYBL2, RBL1, RBL2, RBBP4, TFDP1 and TFDP2. The complex exists in quiescent cells where it represses cell cycle-dependent genes. It dissociates in S phase when LIN9, LIN37, LIN52 and LIN54 form a subcomplex that binds to MYBL2 (By similarity).</text>
</comment>
<proteinExistence type="evidence at protein level"/>
<reference key="1">
    <citation type="submission" date="2003-10" db="EMBL/GenBank/DDBJ databases">
        <title>Cloning of a novel 821 bp cDNA from a whole mouse brain with an ORF encoding a 246 aa protein referred to as antolefinine.</title>
        <authorList>
            <person name="Anton B."/>
            <person name="Leff P."/>
            <person name="Matus M."/>
            <person name="Gonzaga R."/>
            <person name="Medina R."/>
            <person name="Calva J.C."/>
            <person name="Acevedo R."/>
            <person name="Martinez C."/>
            <person name="Retana I."/>
            <person name="Saavedra R."/>
            <person name="Arias A."/>
            <person name="Zavala E."/>
            <person name="Pavon L."/>
            <person name="Alagon A."/>
        </authorList>
    </citation>
    <scope>NUCLEOTIDE SEQUENCE [MRNA]</scope>
    <source>
        <strain>BALB/cJ</strain>
        <tissue>Brain</tissue>
    </source>
</reference>
<reference key="2">
    <citation type="journal article" date="2005" name="Science">
        <title>The transcriptional landscape of the mammalian genome.</title>
        <authorList>
            <person name="Carninci P."/>
            <person name="Kasukawa T."/>
            <person name="Katayama S."/>
            <person name="Gough J."/>
            <person name="Frith M.C."/>
            <person name="Maeda N."/>
            <person name="Oyama R."/>
            <person name="Ravasi T."/>
            <person name="Lenhard B."/>
            <person name="Wells C."/>
            <person name="Kodzius R."/>
            <person name="Shimokawa K."/>
            <person name="Bajic V.B."/>
            <person name="Brenner S.E."/>
            <person name="Batalov S."/>
            <person name="Forrest A.R."/>
            <person name="Zavolan M."/>
            <person name="Davis M.J."/>
            <person name="Wilming L.G."/>
            <person name="Aidinis V."/>
            <person name="Allen J.E."/>
            <person name="Ambesi-Impiombato A."/>
            <person name="Apweiler R."/>
            <person name="Aturaliya R.N."/>
            <person name="Bailey T.L."/>
            <person name="Bansal M."/>
            <person name="Baxter L."/>
            <person name="Beisel K.W."/>
            <person name="Bersano T."/>
            <person name="Bono H."/>
            <person name="Chalk A.M."/>
            <person name="Chiu K.P."/>
            <person name="Choudhary V."/>
            <person name="Christoffels A."/>
            <person name="Clutterbuck D.R."/>
            <person name="Crowe M.L."/>
            <person name="Dalla E."/>
            <person name="Dalrymple B.P."/>
            <person name="de Bono B."/>
            <person name="Della Gatta G."/>
            <person name="di Bernardo D."/>
            <person name="Down T."/>
            <person name="Engstrom P."/>
            <person name="Fagiolini M."/>
            <person name="Faulkner G."/>
            <person name="Fletcher C.F."/>
            <person name="Fukushima T."/>
            <person name="Furuno M."/>
            <person name="Futaki S."/>
            <person name="Gariboldi M."/>
            <person name="Georgii-Hemming P."/>
            <person name="Gingeras T.R."/>
            <person name="Gojobori T."/>
            <person name="Green R.E."/>
            <person name="Gustincich S."/>
            <person name="Harbers M."/>
            <person name="Hayashi Y."/>
            <person name="Hensch T.K."/>
            <person name="Hirokawa N."/>
            <person name="Hill D."/>
            <person name="Huminiecki L."/>
            <person name="Iacono M."/>
            <person name="Ikeo K."/>
            <person name="Iwama A."/>
            <person name="Ishikawa T."/>
            <person name="Jakt M."/>
            <person name="Kanapin A."/>
            <person name="Katoh M."/>
            <person name="Kawasawa Y."/>
            <person name="Kelso J."/>
            <person name="Kitamura H."/>
            <person name="Kitano H."/>
            <person name="Kollias G."/>
            <person name="Krishnan S.P."/>
            <person name="Kruger A."/>
            <person name="Kummerfeld S.K."/>
            <person name="Kurochkin I.V."/>
            <person name="Lareau L.F."/>
            <person name="Lazarevic D."/>
            <person name="Lipovich L."/>
            <person name="Liu J."/>
            <person name="Liuni S."/>
            <person name="McWilliam S."/>
            <person name="Madan Babu M."/>
            <person name="Madera M."/>
            <person name="Marchionni L."/>
            <person name="Matsuda H."/>
            <person name="Matsuzawa S."/>
            <person name="Miki H."/>
            <person name="Mignone F."/>
            <person name="Miyake S."/>
            <person name="Morris K."/>
            <person name="Mottagui-Tabar S."/>
            <person name="Mulder N."/>
            <person name="Nakano N."/>
            <person name="Nakauchi H."/>
            <person name="Ng P."/>
            <person name="Nilsson R."/>
            <person name="Nishiguchi S."/>
            <person name="Nishikawa S."/>
            <person name="Nori F."/>
            <person name="Ohara O."/>
            <person name="Okazaki Y."/>
            <person name="Orlando V."/>
            <person name="Pang K.C."/>
            <person name="Pavan W.J."/>
            <person name="Pavesi G."/>
            <person name="Pesole G."/>
            <person name="Petrovsky N."/>
            <person name="Piazza S."/>
            <person name="Reed J."/>
            <person name="Reid J.F."/>
            <person name="Ring B.Z."/>
            <person name="Ringwald M."/>
            <person name="Rost B."/>
            <person name="Ruan Y."/>
            <person name="Salzberg S.L."/>
            <person name="Sandelin A."/>
            <person name="Schneider C."/>
            <person name="Schoenbach C."/>
            <person name="Sekiguchi K."/>
            <person name="Semple C.A."/>
            <person name="Seno S."/>
            <person name="Sessa L."/>
            <person name="Sheng Y."/>
            <person name="Shibata Y."/>
            <person name="Shimada H."/>
            <person name="Shimada K."/>
            <person name="Silva D."/>
            <person name="Sinclair B."/>
            <person name="Sperling S."/>
            <person name="Stupka E."/>
            <person name="Sugiura K."/>
            <person name="Sultana R."/>
            <person name="Takenaka Y."/>
            <person name="Taki K."/>
            <person name="Tammoja K."/>
            <person name="Tan S.L."/>
            <person name="Tang S."/>
            <person name="Taylor M.S."/>
            <person name="Tegner J."/>
            <person name="Teichmann S.A."/>
            <person name="Ueda H.R."/>
            <person name="van Nimwegen E."/>
            <person name="Verardo R."/>
            <person name="Wei C.L."/>
            <person name="Yagi K."/>
            <person name="Yamanishi H."/>
            <person name="Zabarovsky E."/>
            <person name="Zhu S."/>
            <person name="Zimmer A."/>
            <person name="Hide W."/>
            <person name="Bult C."/>
            <person name="Grimmond S.M."/>
            <person name="Teasdale R.D."/>
            <person name="Liu E.T."/>
            <person name="Brusic V."/>
            <person name="Quackenbush J."/>
            <person name="Wahlestedt C."/>
            <person name="Mattick J.S."/>
            <person name="Hume D.A."/>
            <person name="Kai C."/>
            <person name="Sasaki D."/>
            <person name="Tomaru Y."/>
            <person name="Fukuda S."/>
            <person name="Kanamori-Katayama M."/>
            <person name="Suzuki M."/>
            <person name="Aoki J."/>
            <person name="Arakawa T."/>
            <person name="Iida J."/>
            <person name="Imamura K."/>
            <person name="Itoh M."/>
            <person name="Kato T."/>
            <person name="Kawaji H."/>
            <person name="Kawagashira N."/>
            <person name="Kawashima T."/>
            <person name="Kojima M."/>
            <person name="Kondo S."/>
            <person name="Konno H."/>
            <person name="Nakano K."/>
            <person name="Ninomiya N."/>
            <person name="Nishio T."/>
            <person name="Okada M."/>
            <person name="Plessy C."/>
            <person name="Shibata K."/>
            <person name="Shiraki T."/>
            <person name="Suzuki S."/>
            <person name="Tagami M."/>
            <person name="Waki K."/>
            <person name="Watahiki A."/>
            <person name="Okamura-Oho Y."/>
            <person name="Suzuki H."/>
            <person name="Kawai J."/>
            <person name="Hayashizaki Y."/>
        </authorList>
    </citation>
    <scope>NUCLEOTIDE SEQUENCE [LARGE SCALE MRNA]</scope>
    <source>
        <strain>C57BL/6J</strain>
        <tissue>Pancreas</tissue>
    </source>
</reference>
<reference key="3">
    <citation type="journal article" date="2010" name="Cell">
        <title>A tissue-specific atlas of mouse protein phosphorylation and expression.</title>
        <authorList>
            <person name="Huttlin E.L."/>
            <person name="Jedrychowski M.P."/>
            <person name="Elias J.E."/>
            <person name="Goswami T."/>
            <person name="Rad R."/>
            <person name="Beausoleil S.A."/>
            <person name="Villen J."/>
            <person name="Haas W."/>
            <person name="Sowa M.E."/>
            <person name="Gygi S.P."/>
        </authorList>
    </citation>
    <scope>PHOSPHORYLATION [LARGE SCALE ANALYSIS] AT SER-135; SER-138 AND SER-202</scope>
    <scope>IDENTIFICATION BY MASS SPECTROMETRY [LARGE SCALE ANALYSIS]</scope>
    <source>
        <tissue>Brown adipose tissue</tissue>
        <tissue>Kidney</tissue>
        <tissue>Liver</tissue>
        <tissue>Lung</tissue>
        <tissue>Pancreas</tissue>
        <tissue>Spleen</tissue>
        <tissue>Testis</tissue>
    </source>
</reference>
<accession>Q9D8N6</accession>
<feature type="chain" id="PRO_0000238480" description="Protein lin-37 homolog">
    <location>
        <begin position="1"/>
        <end position="246"/>
    </location>
</feature>
<feature type="region of interest" description="Disordered" evidence="3">
    <location>
        <begin position="39"/>
        <end position="90"/>
    </location>
</feature>
<feature type="region of interest" description="Disordered" evidence="3">
    <location>
        <begin position="129"/>
        <end position="208"/>
    </location>
</feature>
<feature type="compositionally biased region" description="Basic and acidic residues" evidence="3">
    <location>
        <begin position="39"/>
        <end position="55"/>
    </location>
</feature>
<feature type="modified residue" description="N-acetylmethionine" evidence="2">
    <location>
        <position position="1"/>
    </location>
</feature>
<feature type="modified residue" description="Phosphoserine" evidence="4">
    <location>
        <position position="135"/>
    </location>
</feature>
<feature type="modified residue" description="Phosphoserine" evidence="4">
    <location>
        <position position="138"/>
    </location>
</feature>
<feature type="modified residue" description="Phosphothreonine" evidence="2">
    <location>
        <position position="167"/>
    </location>
</feature>
<feature type="modified residue" description="Phosphoserine" evidence="2">
    <location>
        <position position="182"/>
    </location>
</feature>
<feature type="modified residue" description="Phosphoserine" evidence="4">
    <location>
        <position position="202"/>
    </location>
</feature>
<feature type="cross-link" description="Glycyl lysine isopeptide (Lys-Gly) (interchain with G-Cter in SUMO2)" evidence="2">
    <location>
        <position position="5"/>
    </location>
</feature>
<feature type="cross-link" description="Glycyl lysine isopeptide (Lys-Gly) (interchain with G-Cter in SUMO2)" evidence="2">
    <location>
        <position position="7"/>
    </location>
</feature>
<name>LIN37_MOUSE</name>
<organism>
    <name type="scientific">Mus musculus</name>
    <name type="common">Mouse</name>
    <dbReference type="NCBI Taxonomy" id="10090"/>
    <lineage>
        <taxon>Eukaryota</taxon>
        <taxon>Metazoa</taxon>
        <taxon>Chordata</taxon>
        <taxon>Craniata</taxon>
        <taxon>Vertebrata</taxon>
        <taxon>Euteleostomi</taxon>
        <taxon>Mammalia</taxon>
        <taxon>Eutheria</taxon>
        <taxon>Euarchontoglires</taxon>
        <taxon>Glires</taxon>
        <taxon>Rodentia</taxon>
        <taxon>Myomorpha</taxon>
        <taxon>Muroidea</taxon>
        <taxon>Muridae</taxon>
        <taxon>Murinae</taxon>
        <taxon>Mus</taxon>
        <taxon>Mus</taxon>
    </lineage>
</organism>
<keyword id="KW-0007">Acetylation</keyword>
<keyword id="KW-1017">Isopeptide bond</keyword>
<keyword id="KW-0597">Phosphoprotein</keyword>
<keyword id="KW-1185">Reference proteome</keyword>
<keyword id="KW-0832">Ubl conjugation</keyword>
<evidence type="ECO:0000250" key="1"/>
<evidence type="ECO:0000250" key="2">
    <source>
        <dbReference type="UniProtKB" id="Q96GY3"/>
    </source>
</evidence>
<evidence type="ECO:0000256" key="3">
    <source>
        <dbReference type="SAM" id="MobiDB-lite"/>
    </source>
</evidence>
<evidence type="ECO:0007744" key="4">
    <source>
    </source>
</evidence>
<dbReference type="EMBL" id="AY428767">
    <property type="protein sequence ID" value="AAR06606.1"/>
    <property type="molecule type" value="mRNA"/>
</dbReference>
<dbReference type="EMBL" id="AK007858">
    <property type="protein sequence ID" value="BAB25310.1"/>
    <property type="molecule type" value="mRNA"/>
</dbReference>
<dbReference type="CCDS" id="CCDS21098.1"/>
<dbReference type="RefSeq" id="NP_001277498.1">
    <property type="nucleotide sequence ID" value="NM_001290569.1"/>
</dbReference>
<dbReference type="RefSeq" id="NP_083653.1">
    <property type="nucleotide sequence ID" value="NM_029377.2"/>
</dbReference>
<dbReference type="SMR" id="Q9D8N6"/>
<dbReference type="FunCoup" id="Q9D8N6">
    <property type="interactions" value="1957"/>
</dbReference>
<dbReference type="STRING" id="10090.ENSMUSP00000048557"/>
<dbReference type="iPTMnet" id="Q9D8N6"/>
<dbReference type="PhosphoSitePlus" id="Q9D8N6"/>
<dbReference type="jPOST" id="Q9D8N6"/>
<dbReference type="PaxDb" id="10090-ENSMUSP00000048557"/>
<dbReference type="ProteomicsDB" id="252476"/>
<dbReference type="Pumba" id="Q9D8N6"/>
<dbReference type="Antibodypedia" id="65388">
    <property type="antibodies" value="59 antibodies from 17 providers"/>
</dbReference>
<dbReference type="DNASU" id="75660"/>
<dbReference type="Ensembl" id="ENSMUST00000043975.11">
    <property type="protein sequence ID" value="ENSMUSP00000048557.5"/>
    <property type="gene ID" value="ENSMUSG00000036845.13"/>
</dbReference>
<dbReference type="GeneID" id="75660"/>
<dbReference type="KEGG" id="mmu:75660"/>
<dbReference type="UCSC" id="uc009gex.1">
    <property type="organism name" value="mouse"/>
</dbReference>
<dbReference type="AGR" id="MGI:1922910"/>
<dbReference type="CTD" id="55957"/>
<dbReference type="MGI" id="MGI:1922910">
    <property type="gene designation" value="Lin37"/>
</dbReference>
<dbReference type="VEuPathDB" id="HostDB:ENSMUSG00000036845"/>
<dbReference type="eggNOG" id="ENOG502QV4J">
    <property type="taxonomic scope" value="Eukaryota"/>
</dbReference>
<dbReference type="GeneTree" id="ENSGT00390000002748"/>
<dbReference type="InParanoid" id="Q9D8N6"/>
<dbReference type="OMA" id="SNVARWK"/>
<dbReference type="OrthoDB" id="6287771at2759"/>
<dbReference type="PhylomeDB" id="Q9D8N6"/>
<dbReference type="TreeFam" id="TF329230"/>
<dbReference type="Reactome" id="R-MMU-1538133">
    <property type="pathway name" value="G0 and Early G1"/>
</dbReference>
<dbReference type="BioGRID-ORCS" id="75660">
    <property type="hits" value="10 hits in 77 CRISPR screens"/>
</dbReference>
<dbReference type="ChiTaRS" id="Lin37">
    <property type="organism name" value="mouse"/>
</dbReference>
<dbReference type="PRO" id="PR:Q9D8N6"/>
<dbReference type="Proteomes" id="UP000000589">
    <property type="component" value="Chromosome 7"/>
</dbReference>
<dbReference type="RNAct" id="Q9D8N6">
    <property type="molecule type" value="protein"/>
</dbReference>
<dbReference type="Bgee" id="ENSMUSG00000036845">
    <property type="expression patterns" value="Expressed in primary oocyte and 67 other cell types or tissues"/>
</dbReference>
<dbReference type="ExpressionAtlas" id="Q9D8N6">
    <property type="expression patterns" value="baseline and differential"/>
</dbReference>
<dbReference type="GO" id="GO:0017053">
    <property type="term" value="C:transcription repressor complex"/>
    <property type="evidence" value="ECO:0007669"/>
    <property type="project" value="InterPro"/>
</dbReference>
<dbReference type="GO" id="GO:0044877">
    <property type="term" value="F:protein-containing complex binding"/>
    <property type="evidence" value="ECO:0000314"/>
    <property type="project" value="MGI"/>
</dbReference>
<dbReference type="GO" id="GO:0045023">
    <property type="term" value="P:G0 to G1 transition"/>
    <property type="evidence" value="ECO:0000315"/>
    <property type="project" value="MGI"/>
</dbReference>
<dbReference type="GO" id="GO:0010467">
    <property type="term" value="P:gene expression"/>
    <property type="evidence" value="ECO:0000315"/>
    <property type="project" value="MGI"/>
</dbReference>
<dbReference type="InterPro" id="IPR028226">
    <property type="entry name" value="LIN37"/>
</dbReference>
<dbReference type="PANTHER" id="PTHR31336">
    <property type="entry name" value="LIN37 HOMOLOG"/>
    <property type="match status" value="1"/>
</dbReference>
<dbReference type="PANTHER" id="PTHR31336:SF3">
    <property type="entry name" value="PROTEIN LIN-37 HOMOLOG"/>
    <property type="match status" value="1"/>
</dbReference>
<dbReference type="Pfam" id="PF15306">
    <property type="entry name" value="LIN37"/>
    <property type="match status" value="1"/>
</dbReference>